<organism>
    <name type="scientific">Pyrococcus horikoshii (strain ATCC 700860 / DSM 12428 / JCM 9974 / NBRC 100139 / OT-3)</name>
    <dbReference type="NCBI Taxonomy" id="70601"/>
    <lineage>
        <taxon>Archaea</taxon>
        <taxon>Methanobacteriati</taxon>
        <taxon>Methanobacteriota</taxon>
        <taxon>Thermococci</taxon>
        <taxon>Thermococcales</taxon>
        <taxon>Thermococcaceae</taxon>
        <taxon>Pyrococcus</taxon>
    </lineage>
</organism>
<reference key="1">
    <citation type="journal article" date="1998" name="DNA Res.">
        <title>Complete sequence and gene organization of the genome of a hyper-thermophilic archaebacterium, Pyrococcus horikoshii OT3.</title>
        <authorList>
            <person name="Kawarabayasi Y."/>
            <person name="Sawada M."/>
            <person name="Horikawa H."/>
            <person name="Haikawa Y."/>
            <person name="Hino Y."/>
            <person name="Yamamoto S."/>
            <person name="Sekine M."/>
            <person name="Baba S."/>
            <person name="Kosugi H."/>
            <person name="Hosoyama A."/>
            <person name="Nagai Y."/>
            <person name="Sakai M."/>
            <person name="Ogura K."/>
            <person name="Otsuka R."/>
            <person name="Nakazawa H."/>
            <person name="Takamiya M."/>
            <person name="Ohfuku Y."/>
            <person name="Funahashi T."/>
            <person name="Tanaka T."/>
            <person name="Kudoh Y."/>
            <person name="Yamazaki J."/>
            <person name="Kushida N."/>
            <person name="Oguchi A."/>
            <person name="Aoki K."/>
            <person name="Yoshizawa T."/>
            <person name="Nakamura Y."/>
            <person name="Robb F.T."/>
            <person name="Horikoshi K."/>
            <person name="Masuchi Y."/>
            <person name="Shizuya H."/>
            <person name="Kikuchi H."/>
        </authorList>
    </citation>
    <scope>NUCLEOTIDE SEQUENCE [LARGE SCALE GENOMIC DNA]</scope>
    <source>
        <strain>ATCC 700860 / DSM 12428 / JCM 9974 / NBRC 100139 / OT-3</strain>
    </source>
</reference>
<comment type="similarity">
    <text evidence="1">Belongs to the UPF0215 family.</text>
</comment>
<proteinExistence type="inferred from homology"/>
<gene>
    <name type="ordered locus">PH0071</name>
</gene>
<feature type="chain" id="PRO_0000149242" description="UPF0215 protein PH0071">
    <location>
        <begin position="1"/>
        <end position="193"/>
    </location>
</feature>
<evidence type="ECO:0000255" key="1">
    <source>
        <dbReference type="HAMAP-Rule" id="MF_00582"/>
    </source>
</evidence>
<sequence length="193" mass="21386">MIRKVKKEIRVIGFDDGTFKFKSRGDKVILVGVIMKGSSDVVGIVTRWITIDGLDVTDAIIDAINSSRFKDLRVVLLKGITYAGFNIVDVSRVFKETGLPVIVVVRKKPDIGAMESALRKHFDDYEVRIKLLRSAGKLVELIPGKLYYQAIGISYDKAAEVIQVTSRNSMVPEALRLAHMIASAVMCGESKKD</sequence>
<protein>
    <recommendedName>
        <fullName evidence="1">UPF0215 protein PH0071</fullName>
    </recommendedName>
</protein>
<name>Y071_PYRHO</name>
<accession>O57792</accession>
<dbReference type="EMBL" id="BA000001">
    <property type="protein sequence ID" value="BAA29140.1"/>
    <property type="molecule type" value="Genomic_DNA"/>
</dbReference>
<dbReference type="PIR" id="E71226">
    <property type="entry name" value="E71226"/>
</dbReference>
<dbReference type="RefSeq" id="WP_010884191.1">
    <property type="nucleotide sequence ID" value="NC_000961.1"/>
</dbReference>
<dbReference type="SMR" id="O57792"/>
<dbReference type="STRING" id="70601.gene:9376979"/>
<dbReference type="EnsemblBacteria" id="BAA29140">
    <property type="protein sequence ID" value="BAA29140"/>
    <property type="gene ID" value="BAA29140"/>
</dbReference>
<dbReference type="GeneID" id="1443973"/>
<dbReference type="KEGG" id="pho:PH0071"/>
<dbReference type="eggNOG" id="arCOG00928">
    <property type="taxonomic scope" value="Archaea"/>
</dbReference>
<dbReference type="OrthoDB" id="15207at2157"/>
<dbReference type="Proteomes" id="UP000000752">
    <property type="component" value="Chromosome"/>
</dbReference>
<dbReference type="Gene3D" id="3.30.2170.10">
    <property type="entry name" value="archaeoglobus fulgidus dsm 4304 superfamily"/>
    <property type="match status" value="1"/>
</dbReference>
<dbReference type="HAMAP" id="MF_00582">
    <property type="entry name" value="UPF0215"/>
    <property type="match status" value="1"/>
</dbReference>
<dbReference type="InterPro" id="IPR002802">
    <property type="entry name" value="Endo_dU"/>
</dbReference>
<dbReference type="NCBIfam" id="NF001977">
    <property type="entry name" value="PRK00766.1"/>
    <property type="match status" value="1"/>
</dbReference>
<dbReference type="PANTHER" id="PTHR39518">
    <property type="entry name" value="UPF0215 PROTEIN MJ1150"/>
    <property type="match status" value="1"/>
</dbReference>
<dbReference type="PANTHER" id="PTHR39518:SF2">
    <property type="entry name" value="UPF0215 PROTEIN MJ1150"/>
    <property type="match status" value="1"/>
</dbReference>
<dbReference type="Pfam" id="PF01949">
    <property type="entry name" value="DUF99"/>
    <property type="match status" value="1"/>
</dbReference>
<dbReference type="PIRSF" id="PIRSF006380">
    <property type="entry name" value="UCP006380"/>
    <property type="match status" value="1"/>
</dbReference>